<dbReference type="EMBL" id="AB012000">
    <property type="protein sequence ID" value="BAA32775.1"/>
    <property type="molecule type" value="Genomic_DNA"/>
</dbReference>
<dbReference type="EMBL" id="AB039322">
    <property type="protein sequence ID" value="BAB33129.1"/>
    <property type="molecule type" value="Genomic_DNA"/>
</dbReference>
<dbReference type="GO" id="GO:0009507">
    <property type="term" value="C:chloroplast"/>
    <property type="evidence" value="ECO:0007669"/>
    <property type="project" value="UniProtKB-SubCell"/>
</dbReference>
<dbReference type="GO" id="GO:0003723">
    <property type="term" value="F:RNA binding"/>
    <property type="evidence" value="ECO:0007669"/>
    <property type="project" value="UniProtKB-KW"/>
</dbReference>
<dbReference type="GO" id="GO:0006397">
    <property type="term" value="P:mRNA processing"/>
    <property type="evidence" value="ECO:0007669"/>
    <property type="project" value="UniProtKB-KW"/>
</dbReference>
<dbReference type="GO" id="GO:0008380">
    <property type="term" value="P:RNA splicing"/>
    <property type="evidence" value="ECO:0007669"/>
    <property type="project" value="UniProtKB-UniRule"/>
</dbReference>
<dbReference type="GO" id="GO:0008033">
    <property type="term" value="P:tRNA processing"/>
    <property type="evidence" value="ECO:0007669"/>
    <property type="project" value="UniProtKB-KW"/>
</dbReference>
<dbReference type="HAMAP" id="MF_01390">
    <property type="entry name" value="MatK"/>
    <property type="match status" value="1"/>
</dbReference>
<dbReference type="InterPro" id="IPR024937">
    <property type="entry name" value="Domain_X"/>
</dbReference>
<dbReference type="InterPro" id="IPR002866">
    <property type="entry name" value="Maturase_MatK"/>
</dbReference>
<dbReference type="InterPro" id="IPR024942">
    <property type="entry name" value="Maturase_MatK_N"/>
</dbReference>
<dbReference type="PANTHER" id="PTHR34811">
    <property type="entry name" value="MATURASE K"/>
    <property type="match status" value="1"/>
</dbReference>
<dbReference type="PANTHER" id="PTHR34811:SF1">
    <property type="entry name" value="MATURASE K"/>
    <property type="match status" value="1"/>
</dbReference>
<dbReference type="Pfam" id="PF01348">
    <property type="entry name" value="Intron_maturas2"/>
    <property type="match status" value="1"/>
</dbReference>
<dbReference type="Pfam" id="PF01824">
    <property type="entry name" value="MatK_N"/>
    <property type="match status" value="1"/>
</dbReference>
<proteinExistence type="inferred from homology"/>
<comment type="function">
    <text evidence="1">Usually encoded in the trnK tRNA gene intron. Probably assists in splicing its own and other chloroplast group II introns.</text>
</comment>
<comment type="subcellular location">
    <subcellularLocation>
        <location>Plastid</location>
        <location>Chloroplast</location>
    </subcellularLocation>
</comment>
<comment type="similarity">
    <text evidence="1">Belongs to the intron maturase 2 family. MatK subfamily.</text>
</comment>
<organism>
    <name type="scientific">Rosa stellata</name>
    <name type="common">Star rose</name>
    <name type="synonym">Desert rose</name>
    <dbReference type="NCBI Taxonomy" id="74655"/>
    <lineage>
        <taxon>Eukaryota</taxon>
        <taxon>Viridiplantae</taxon>
        <taxon>Streptophyta</taxon>
        <taxon>Embryophyta</taxon>
        <taxon>Tracheophyta</taxon>
        <taxon>Spermatophyta</taxon>
        <taxon>Magnoliopsida</taxon>
        <taxon>eudicotyledons</taxon>
        <taxon>Gunneridae</taxon>
        <taxon>Pentapetalae</taxon>
        <taxon>rosids</taxon>
        <taxon>fabids</taxon>
        <taxon>Rosales</taxon>
        <taxon>Rosaceae</taxon>
        <taxon>Rosoideae</taxon>
        <taxon>Rosoideae incertae sedis</taxon>
        <taxon>Rosa</taxon>
    </lineage>
</organism>
<protein>
    <recommendedName>
        <fullName evidence="1">Maturase K</fullName>
    </recommendedName>
    <alternativeName>
        <fullName evidence="1">Intron maturase</fullName>
    </alternativeName>
</protein>
<accession>O78256</accession>
<gene>
    <name evidence="1" type="primary">matK</name>
</gene>
<sequence length="505" mass="59950">MEEFQGYLELYRSQQHDFLYPLIFREYIYALAHDRGLNRSVLLDNVGYDKKSSLLIIKRLISRMYHQNHFIISVNDSNQNKFLGYNKNLYSQMISEGFAVIVEIPFSLRLVSSLEETEIVKSYNLRSIHSIFPFLEDKFPHLNYASDVLIPYPIHLEILVQTLRYYVKDPSSLHLLRLFLHEYYNWNTLITITPKKSIFAKSNQRLFLLLYNSYVCEYESILLFLRNQSNHLRLTSSGILFERIRFYEKIKYPVEEVFANDFPATLWFFKDPFIQYVRYQGKSILASKDTPLLMNKWKYYLVHFWQCHFYVWSQPGRIHRNQLSKHSFDFLGYLSSIRPNISVVRSQLLENSFLMDNAMKKLDTLFPIIPMIGSLAKVKFCNTSGHPISKSSWADSSDSDIIDRFVRIGGNLSHYYSGSSKKKSLYRIKYILRLSCVKTLARKHKSTVRTFLKRLGPKLLDEFFTEEEQIFSLLFPRTSSTLKRFYRGRIWYLDILCINDLVNHE</sequence>
<evidence type="ECO:0000255" key="1">
    <source>
        <dbReference type="HAMAP-Rule" id="MF_01390"/>
    </source>
</evidence>
<geneLocation type="chloroplast"/>
<reference key="1">
    <citation type="journal article" date="1998" name="Sci. Hortic.">
        <title>Phylogenetic analyses of the genus Rosa using the matK sequence: molecular evidence for the narrow genetic background of modern roses.</title>
        <authorList>
            <person name="Matsumoto S."/>
            <person name="Kouchi M."/>
            <person name="Yabuki J."/>
            <person name="Kusunoki M."/>
            <person name="Ueda Y."/>
            <person name="Fukui H."/>
        </authorList>
    </citation>
    <scope>NUCLEOTIDE SEQUENCE [GENOMIC DNA]</scope>
    <source>
        <strain>cv. mirifica Cockerell</strain>
        <tissue>Leaf</tissue>
    </source>
</reference>
<reference key="2">
    <citation type="submission" date="2000-02" db="EMBL/GenBank/DDBJ databases">
        <title>Phylogenetic analysis of Japanese Rosa using matK sequences.</title>
        <authorList>
            <person name="Wu S."/>
            <person name="Ueda Y."/>
            <person name="Matsumoto S."/>
            <person name="Nishihara S."/>
        </authorList>
    </citation>
    <scope>NUCLEOTIDE SEQUENCE [GENOMIC DNA]</scope>
    <source>
        <strain>cv. mirifica Cockerell</strain>
        <tissue>Leaf</tissue>
    </source>
</reference>
<feature type="chain" id="PRO_0000143692" description="Maturase K">
    <location>
        <begin position="1"/>
        <end position="505"/>
    </location>
</feature>
<keyword id="KW-0150">Chloroplast</keyword>
<keyword id="KW-0507">mRNA processing</keyword>
<keyword id="KW-0934">Plastid</keyword>
<keyword id="KW-0694">RNA-binding</keyword>
<keyword id="KW-0819">tRNA processing</keyword>
<name>MATK_ROSST</name>